<proteinExistence type="inferred from homology"/>
<name>COBT_ECO57</name>
<protein>
    <recommendedName>
        <fullName evidence="1">Nicotinate-nucleotide--dimethylbenzimidazole phosphoribosyltransferase</fullName>
        <shortName evidence="1">NN:DBI PRT</shortName>
        <ecNumber evidence="1">2.4.2.21</ecNumber>
    </recommendedName>
    <alternativeName>
        <fullName evidence="1">N(1)-alpha-phosphoribosyltransferase</fullName>
    </alternativeName>
</protein>
<feature type="chain" id="PRO_0000167050" description="Nicotinate-nucleotide--dimethylbenzimidazole phosphoribosyltransferase">
    <location>
        <begin position="1"/>
        <end position="359"/>
    </location>
</feature>
<feature type="active site" description="Proton acceptor" evidence="1">
    <location>
        <position position="318"/>
    </location>
</feature>
<evidence type="ECO:0000255" key="1">
    <source>
        <dbReference type="HAMAP-Rule" id="MF_00230"/>
    </source>
</evidence>
<keyword id="KW-0169">Cobalamin biosynthesis</keyword>
<keyword id="KW-0328">Glycosyltransferase</keyword>
<keyword id="KW-1185">Reference proteome</keyword>
<keyword id="KW-0808">Transferase</keyword>
<comment type="function">
    <text evidence="1">Catalyzes the synthesis of alpha-ribazole-5'-phosphate from nicotinate mononucleotide (NAMN) and 5,6-dimethylbenzimidazole (DMB).</text>
</comment>
<comment type="catalytic activity">
    <reaction evidence="1">
        <text>5,6-dimethylbenzimidazole + nicotinate beta-D-ribonucleotide = alpha-ribazole 5'-phosphate + nicotinate + H(+)</text>
        <dbReference type="Rhea" id="RHEA:11196"/>
        <dbReference type="ChEBI" id="CHEBI:15378"/>
        <dbReference type="ChEBI" id="CHEBI:15890"/>
        <dbReference type="ChEBI" id="CHEBI:32544"/>
        <dbReference type="ChEBI" id="CHEBI:57502"/>
        <dbReference type="ChEBI" id="CHEBI:57918"/>
        <dbReference type="EC" id="2.4.2.21"/>
    </reaction>
</comment>
<comment type="pathway">
    <text evidence="1">Nucleoside biosynthesis; alpha-ribazole biosynthesis; alpha-ribazole from 5,6-dimethylbenzimidazole: step 1/2.</text>
</comment>
<comment type="subunit">
    <text evidence="1">Homodimer.</text>
</comment>
<comment type="similarity">
    <text evidence="1">Belongs to the CobT family.</text>
</comment>
<organism>
    <name type="scientific">Escherichia coli O157:H7</name>
    <dbReference type="NCBI Taxonomy" id="83334"/>
    <lineage>
        <taxon>Bacteria</taxon>
        <taxon>Pseudomonadati</taxon>
        <taxon>Pseudomonadota</taxon>
        <taxon>Gammaproteobacteria</taxon>
        <taxon>Enterobacterales</taxon>
        <taxon>Enterobacteriaceae</taxon>
        <taxon>Escherichia</taxon>
    </lineage>
</organism>
<reference key="1">
    <citation type="journal article" date="2001" name="Nature">
        <title>Genome sequence of enterohaemorrhagic Escherichia coli O157:H7.</title>
        <authorList>
            <person name="Perna N.T."/>
            <person name="Plunkett G. III"/>
            <person name="Burland V."/>
            <person name="Mau B."/>
            <person name="Glasner J.D."/>
            <person name="Rose D.J."/>
            <person name="Mayhew G.F."/>
            <person name="Evans P.S."/>
            <person name="Gregor J."/>
            <person name="Kirkpatrick H.A."/>
            <person name="Posfai G."/>
            <person name="Hackett J."/>
            <person name="Klink S."/>
            <person name="Boutin A."/>
            <person name="Shao Y."/>
            <person name="Miller L."/>
            <person name="Grotbeck E.J."/>
            <person name="Davis N.W."/>
            <person name="Lim A."/>
            <person name="Dimalanta E.T."/>
            <person name="Potamousis K."/>
            <person name="Apodaca J."/>
            <person name="Anantharaman T.S."/>
            <person name="Lin J."/>
            <person name="Yen G."/>
            <person name="Schwartz D.C."/>
            <person name="Welch R.A."/>
            <person name="Blattner F.R."/>
        </authorList>
    </citation>
    <scope>NUCLEOTIDE SEQUENCE [LARGE SCALE GENOMIC DNA]</scope>
    <source>
        <strain>O157:H7 / EDL933 / ATCC 700927 / EHEC</strain>
    </source>
</reference>
<reference key="2">
    <citation type="journal article" date="2001" name="DNA Res.">
        <title>Complete genome sequence of enterohemorrhagic Escherichia coli O157:H7 and genomic comparison with a laboratory strain K-12.</title>
        <authorList>
            <person name="Hayashi T."/>
            <person name="Makino K."/>
            <person name="Ohnishi M."/>
            <person name="Kurokawa K."/>
            <person name="Ishii K."/>
            <person name="Yokoyama K."/>
            <person name="Han C.-G."/>
            <person name="Ohtsubo E."/>
            <person name="Nakayama K."/>
            <person name="Murata T."/>
            <person name="Tanaka M."/>
            <person name="Tobe T."/>
            <person name="Iida T."/>
            <person name="Takami H."/>
            <person name="Honda T."/>
            <person name="Sasakawa C."/>
            <person name="Ogasawara N."/>
            <person name="Yasunaga T."/>
            <person name="Kuhara S."/>
            <person name="Shiba T."/>
            <person name="Hattori M."/>
            <person name="Shinagawa H."/>
        </authorList>
    </citation>
    <scope>NUCLEOTIDE SEQUENCE [LARGE SCALE GENOMIC DNA]</scope>
    <source>
        <strain>O157:H7 / Sakai / RIMD 0509952 / EHEC</strain>
    </source>
</reference>
<sequence length="359" mass="36897">MQTLANLLNTIPAIDPAAMSRAQRHIDGLLKPVGSLGRLEALGVQLAGMPGLNGIPHVGKKAVLVMCADHGVWEEGVAISPKEVTAIQAENMTRGTTGVCVLAAQAGANVHVIDVGIDTAEPIPGLINMRVARGSGNIASAPAMSRRQAEKLLLDVICYTRELAKNGVTLFGVGELGMANTTPAAAIVSTITGRDPEEVVGIGANLPTDKLANKIDVVRRAITLNQPNPQDGVNVLAKVGGFDLVGMAGVMLGAASCGLPVLLDGFLSYAAALAACQMSPAIKPYLIPSHLSAEKGARIALSHLGLEPFLNMDMRLGEGSGAALAMPIIEAACAIYNNMGELAASKIVLPGNTTSDLNS</sequence>
<dbReference type="EC" id="2.4.2.21" evidence="1"/>
<dbReference type="EMBL" id="AE005174">
    <property type="protein sequence ID" value="AAG57052.1"/>
    <property type="molecule type" value="Genomic_DNA"/>
</dbReference>
<dbReference type="EMBL" id="BA000007">
    <property type="protein sequence ID" value="BAB36209.1"/>
    <property type="molecule type" value="Genomic_DNA"/>
</dbReference>
<dbReference type="PIR" id="B90977">
    <property type="entry name" value="B90977"/>
</dbReference>
<dbReference type="PIR" id="H85823">
    <property type="entry name" value="H85823"/>
</dbReference>
<dbReference type="RefSeq" id="NP_310813.1">
    <property type="nucleotide sequence ID" value="NC_002695.1"/>
</dbReference>
<dbReference type="RefSeq" id="WP_001193830.1">
    <property type="nucleotide sequence ID" value="NZ_VOAI01000052.1"/>
</dbReference>
<dbReference type="SMR" id="Q8X8V0"/>
<dbReference type="STRING" id="155864.Z3151"/>
<dbReference type="GeneID" id="913061"/>
<dbReference type="KEGG" id="ece:Z3151"/>
<dbReference type="KEGG" id="ecs:ECs_2786"/>
<dbReference type="PATRIC" id="fig|386585.9.peg.2919"/>
<dbReference type="eggNOG" id="COG2038">
    <property type="taxonomic scope" value="Bacteria"/>
</dbReference>
<dbReference type="HOGENOM" id="CLU_002982_0_0_6"/>
<dbReference type="OMA" id="AWMRKCA"/>
<dbReference type="UniPathway" id="UPA00061">
    <property type="reaction ID" value="UER00516"/>
</dbReference>
<dbReference type="Proteomes" id="UP000000558">
    <property type="component" value="Chromosome"/>
</dbReference>
<dbReference type="Proteomes" id="UP000002519">
    <property type="component" value="Chromosome"/>
</dbReference>
<dbReference type="GO" id="GO:0008939">
    <property type="term" value="F:nicotinate-nucleotide-dimethylbenzimidazole phosphoribosyltransferase activity"/>
    <property type="evidence" value="ECO:0007669"/>
    <property type="project" value="UniProtKB-UniRule"/>
</dbReference>
<dbReference type="GO" id="GO:0009236">
    <property type="term" value="P:cobalamin biosynthetic process"/>
    <property type="evidence" value="ECO:0007669"/>
    <property type="project" value="UniProtKB-KW"/>
</dbReference>
<dbReference type="CDD" id="cd02439">
    <property type="entry name" value="DMB-PRT_CobT"/>
    <property type="match status" value="1"/>
</dbReference>
<dbReference type="FunFam" id="1.10.1610.10:FF:000001">
    <property type="entry name" value="Nicotinate-nucleotide--dimethylbenzimidazole phosphoribosyltransferase"/>
    <property type="match status" value="1"/>
</dbReference>
<dbReference type="FunFam" id="3.40.50.10210:FF:000001">
    <property type="entry name" value="Nicotinate-nucleotide--dimethylbenzimidazole phosphoribosyltransferase"/>
    <property type="match status" value="1"/>
</dbReference>
<dbReference type="Gene3D" id="1.10.1610.10">
    <property type="match status" value="1"/>
</dbReference>
<dbReference type="Gene3D" id="3.40.50.10210">
    <property type="match status" value="1"/>
</dbReference>
<dbReference type="HAMAP" id="MF_00230">
    <property type="entry name" value="CobT"/>
    <property type="match status" value="1"/>
</dbReference>
<dbReference type="InterPro" id="IPR003200">
    <property type="entry name" value="Nict_dMeBzImd_PRibTrfase"/>
</dbReference>
<dbReference type="InterPro" id="IPR017846">
    <property type="entry name" value="Nict_dMeBzImd_PRibTrfase_bact"/>
</dbReference>
<dbReference type="InterPro" id="IPR023195">
    <property type="entry name" value="Nict_dMeBzImd_PRibTrfase_N"/>
</dbReference>
<dbReference type="InterPro" id="IPR036087">
    <property type="entry name" value="Nict_dMeBzImd_PRibTrfase_sf"/>
</dbReference>
<dbReference type="NCBIfam" id="TIGR03160">
    <property type="entry name" value="cobT_DBIPRT"/>
    <property type="match status" value="1"/>
</dbReference>
<dbReference type="NCBIfam" id="NF000996">
    <property type="entry name" value="PRK00105.1"/>
    <property type="match status" value="1"/>
</dbReference>
<dbReference type="PANTHER" id="PTHR43463">
    <property type="entry name" value="NICOTINATE-NUCLEOTIDE--DIMETHYLBENZIMIDAZOLE PHOSPHORIBOSYLTRANSFERASE"/>
    <property type="match status" value="1"/>
</dbReference>
<dbReference type="PANTHER" id="PTHR43463:SF1">
    <property type="entry name" value="NICOTINATE-NUCLEOTIDE--DIMETHYLBENZIMIDAZOLE PHOSPHORIBOSYLTRANSFERASE"/>
    <property type="match status" value="1"/>
</dbReference>
<dbReference type="Pfam" id="PF02277">
    <property type="entry name" value="DBI_PRT"/>
    <property type="match status" value="1"/>
</dbReference>
<dbReference type="SUPFAM" id="SSF52733">
    <property type="entry name" value="Nicotinate mononucleotide:5,6-dimethylbenzimidazole phosphoribosyltransferase (CobT)"/>
    <property type="match status" value="1"/>
</dbReference>
<gene>
    <name evidence="1" type="primary">cobT</name>
    <name type="ordered locus">Z3151</name>
    <name type="ordered locus">ECs2786</name>
</gene>
<accession>Q8X8V0</accession>